<protein>
    <recommendedName>
        <fullName evidence="1">3-dehydroquinate synthase</fullName>
        <shortName evidence="1">DHQS</shortName>
        <ecNumber evidence="1">4.2.3.4</ecNumber>
    </recommendedName>
</protein>
<feature type="chain" id="PRO_1000094574" description="3-dehydroquinate synthase">
    <location>
        <begin position="1"/>
        <end position="365"/>
    </location>
</feature>
<feature type="binding site" evidence="1">
    <location>
        <begin position="69"/>
        <end position="74"/>
    </location>
    <ligand>
        <name>NAD(+)</name>
        <dbReference type="ChEBI" id="CHEBI:57540"/>
    </ligand>
</feature>
<feature type="binding site" evidence="1">
    <location>
        <begin position="103"/>
        <end position="107"/>
    </location>
    <ligand>
        <name>NAD(+)</name>
        <dbReference type="ChEBI" id="CHEBI:57540"/>
    </ligand>
</feature>
<feature type="binding site" evidence="1">
    <location>
        <begin position="127"/>
        <end position="128"/>
    </location>
    <ligand>
        <name>NAD(+)</name>
        <dbReference type="ChEBI" id="CHEBI:57540"/>
    </ligand>
</feature>
<feature type="binding site" evidence="1">
    <location>
        <position position="140"/>
    </location>
    <ligand>
        <name>NAD(+)</name>
        <dbReference type="ChEBI" id="CHEBI:57540"/>
    </ligand>
</feature>
<feature type="binding site" evidence="1">
    <location>
        <position position="149"/>
    </location>
    <ligand>
        <name>NAD(+)</name>
        <dbReference type="ChEBI" id="CHEBI:57540"/>
    </ligand>
</feature>
<feature type="binding site" evidence="1">
    <location>
        <begin position="167"/>
        <end position="170"/>
    </location>
    <ligand>
        <name>NAD(+)</name>
        <dbReference type="ChEBI" id="CHEBI:57540"/>
    </ligand>
</feature>
<feature type="binding site" evidence="1">
    <location>
        <position position="182"/>
    </location>
    <ligand>
        <name>Zn(2+)</name>
        <dbReference type="ChEBI" id="CHEBI:29105"/>
    </ligand>
</feature>
<feature type="binding site" evidence="1">
    <location>
        <position position="245"/>
    </location>
    <ligand>
        <name>Zn(2+)</name>
        <dbReference type="ChEBI" id="CHEBI:29105"/>
    </ligand>
</feature>
<feature type="binding site" evidence="1">
    <location>
        <position position="262"/>
    </location>
    <ligand>
        <name>Zn(2+)</name>
        <dbReference type="ChEBI" id="CHEBI:29105"/>
    </ligand>
</feature>
<evidence type="ECO:0000255" key="1">
    <source>
        <dbReference type="HAMAP-Rule" id="MF_00110"/>
    </source>
</evidence>
<keyword id="KW-0028">Amino-acid biosynthesis</keyword>
<keyword id="KW-0057">Aromatic amino acid biosynthesis</keyword>
<keyword id="KW-0170">Cobalt</keyword>
<keyword id="KW-0963">Cytoplasm</keyword>
<keyword id="KW-0456">Lyase</keyword>
<keyword id="KW-0479">Metal-binding</keyword>
<keyword id="KW-0520">NAD</keyword>
<keyword id="KW-0547">Nucleotide-binding</keyword>
<keyword id="KW-0862">Zinc</keyword>
<organism>
    <name type="scientific">Pseudomonas putida (strain W619)</name>
    <dbReference type="NCBI Taxonomy" id="390235"/>
    <lineage>
        <taxon>Bacteria</taxon>
        <taxon>Pseudomonadati</taxon>
        <taxon>Pseudomonadota</taxon>
        <taxon>Gammaproteobacteria</taxon>
        <taxon>Pseudomonadales</taxon>
        <taxon>Pseudomonadaceae</taxon>
        <taxon>Pseudomonas</taxon>
    </lineage>
</organism>
<dbReference type="EC" id="4.2.3.4" evidence="1"/>
<dbReference type="EMBL" id="CP000949">
    <property type="protein sequence ID" value="ACA70894.1"/>
    <property type="molecule type" value="Genomic_DNA"/>
</dbReference>
<dbReference type="SMR" id="B1J2J5"/>
<dbReference type="STRING" id="390235.PputW619_0388"/>
<dbReference type="KEGG" id="ppw:PputW619_0388"/>
<dbReference type="eggNOG" id="COG0337">
    <property type="taxonomic scope" value="Bacteria"/>
</dbReference>
<dbReference type="HOGENOM" id="CLU_001201_0_2_6"/>
<dbReference type="OrthoDB" id="9806583at2"/>
<dbReference type="UniPathway" id="UPA00053">
    <property type="reaction ID" value="UER00085"/>
</dbReference>
<dbReference type="GO" id="GO:0005737">
    <property type="term" value="C:cytoplasm"/>
    <property type="evidence" value="ECO:0007669"/>
    <property type="project" value="UniProtKB-SubCell"/>
</dbReference>
<dbReference type="GO" id="GO:0003856">
    <property type="term" value="F:3-dehydroquinate synthase activity"/>
    <property type="evidence" value="ECO:0007669"/>
    <property type="project" value="UniProtKB-UniRule"/>
</dbReference>
<dbReference type="GO" id="GO:0046872">
    <property type="term" value="F:metal ion binding"/>
    <property type="evidence" value="ECO:0007669"/>
    <property type="project" value="UniProtKB-KW"/>
</dbReference>
<dbReference type="GO" id="GO:0000166">
    <property type="term" value="F:nucleotide binding"/>
    <property type="evidence" value="ECO:0007669"/>
    <property type="project" value="UniProtKB-KW"/>
</dbReference>
<dbReference type="GO" id="GO:0008652">
    <property type="term" value="P:amino acid biosynthetic process"/>
    <property type="evidence" value="ECO:0007669"/>
    <property type="project" value="UniProtKB-KW"/>
</dbReference>
<dbReference type="GO" id="GO:0009073">
    <property type="term" value="P:aromatic amino acid family biosynthetic process"/>
    <property type="evidence" value="ECO:0007669"/>
    <property type="project" value="UniProtKB-KW"/>
</dbReference>
<dbReference type="GO" id="GO:0009423">
    <property type="term" value="P:chorismate biosynthetic process"/>
    <property type="evidence" value="ECO:0007669"/>
    <property type="project" value="UniProtKB-UniRule"/>
</dbReference>
<dbReference type="CDD" id="cd08195">
    <property type="entry name" value="DHQS"/>
    <property type="match status" value="1"/>
</dbReference>
<dbReference type="FunFam" id="1.20.1090.10:FF:000002">
    <property type="entry name" value="3-dehydroquinate synthase"/>
    <property type="match status" value="1"/>
</dbReference>
<dbReference type="FunFam" id="3.40.50.1970:FF:000001">
    <property type="entry name" value="3-dehydroquinate synthase"/>
    <property type="match status" value="1"/>
</dbReference>
<dbReference type="Gene3D" id="3.40.50.1970">
    <property type="match status" value="1"/>
</dbReference>
<dbReference type="Gene3D" id="1.20.1090.10">
    <property type="entry name" value="Dehydroquinate synthase-like - alpha domain"/>
    <property type="match status" value="1"/>
</dbReference>
<dbReference type="HAMAP" id="MF_00110">
    <property type="entry name" value="DHQ_synthase"/>
    <property type="match status" value="1"/>
</dbReference>
<dbReference type="InterPro" id="IPR050071">
    <property type="entry name" value="Dehydroquinate_synthase"/>
</dbReference>
<dbReference type="InterPro" id="IPR016037">
    <property type="entry name" value="DHQ_synth_AroB"/>
</dbReference>
<dbReference type="InterPro" id="IPR030963">
    <property type="entry name" value="DHQ_synth_fam"/>
</dbReference>
<dbReference type="InterPro" id="IPR030960">
    <property type="entry name" value="DHQS/DOIS_N"/>
</dbReference>
<dbReference type="InterPro" id="IPR056179">
    <property type="entry name" value="DHQS_C"/>
</dbReference>
<dbReference type="NCBIfam" id="TIGR01357">
    <property type="entry name" value="aroB"/>
    <property type="match status" value="1"/>
</dbReference>
<dbReference type="PANTHER" id="PTHR43622">
    <property type="entry name" value="3-DEHYDROQUINATE SYNTHASE"/>
    <property type="match status" value="1"/>
</dbReference>
<dbReference type="PANTHER" id="PTHR43622:SF7">
    <property type="entry name" value="3-DEHYDROQUINATE SYNTHASE, CHLOROPLASTIC"/>
    <property type="match status" value="1"/>
</dbReference>
<dbReference type="Pfam" id="PF01761">
    <property type="entry name" value="DHQ_synthase"/>
    <property type="match status" value="1"/>
</dbReference>
<dbReference type="Pfam" id="PF24621">
    <property type="entry name" value="DHQS_C"/>
    <property type="match status" value="1"/>
</dbReference>
<dbReference type="PIRSF" id="PIRSF001455">
    <property type="entry name" value="DHQ_synth"/>
    <property type="match status" value="1"/>
</dbReference>
<dbReference type="SUPFAM" id="SSF56796">
    <property type="entry name" value="Dehydroquinate synthase-like"/>
    <property type="match status" value="1"/>
</dbReference>
<proteinExistence type="inferred from homology"/>
<reference key="1">
    <citation type="submission" date="2008-02" db="EMBL/GenBank/DDBJ databases">
        <title>Complete sequence of Pseudomonas putida W619.</title>
        <authorList>
            <person name="Copeland A."/>
            <person name="Lucas S."/>
            <person name="Lapidus A."/>
            <person name="Barry K."/>
            <person name="Detter J.C."/>
            <person name="Glavina del Rio T."/>
            <person name="Dalin E."/>
            <person name="Tice H."/>
            <person name="Pitluck S."/>
            <person name="Chain P."/>
            <person name="Malfatti S."/>
            <person name="Shin M."/>
            <person name="Vergez L."/>
            <person name="Schmutz J."/>
            <person name="Larimer F."/>
            <person name="Land M."/>
            <person name="Hauser L."/>
            <person name="Kyrpides N."/>
            <person name="Kim E."/>
            <person name="Taghavi S."/>
            <person name="Vangronsveld D."/>
            <person name="van der Lelie D."/>
            <person name="Richardson P."/>
        </authorList>
    </citation>
    <scope>NUCLEOTIDE SEQUENCE [LARGE SCALE GENOMIC DNA]</scope>
    <source>
        <strain>W619</strain>
    </source>
</reference>
<accession>B1J2J5</accession>
<name>AROB_PSEPW</name>
<sequence length="365" mass="39548">MQTLKVDLGERSYPIYIGEGLLDQPELLAPHIAGRQIAIVSNETVAPLYLERLSKALGAYSVLPVILPDGEAHKNWETLQLIFDGLLTARHDRRTTVVALGGGVIGDMAGFAAACYQRGVDFIQVPTTLLSQVDSSVGGKTGINHPLGKNMVGAFYQPNAVLIDTTTLNTLPERELSAGLAEVIKYGLICDKPFLGWLEDNIKALRALEPAALTEAIQRSCAAKAAVVGADERESGVRATLNLGHTFGHAIETHMGYGVWLHGEAVAAGTVMALEMSMRLGWIDQSERDRAIRLLQDAGLPVVPPQEMTPAHFMEHMAVDKKVIDGRLRLVLLRQMGEAVVTDDYPKEILQATLSADYRAIVAQL</sequence>
<comment type="function">
    <text evidence="1">Catalyzes the conversion of 3-deoxy-D-arabino-heptulosonate 7-phosphate (DAHP) to dehydroquinate (DHQ).</text>
</comment>
<comment type="catalytic activity">
    <reaction evidence="1">
        <text>7-phospho-2-dehydro-3-deoxy-D-arabino-heptonate = 3-dehydroquinate + phosphate</text>
        <dbReference type="Rhea" id="RHEA:21968"/>
        <dbReference type="ChEBI" id="CHEBI:32364"/>
        <dbReference type="ChEBI" id="CHEBI:43474"/>
        <dbReference type="ChEBI" id="CHEBI:58394"/>
        <dbReference type="EC" id="4.2.3.4"/>
    </reaction>
</comment>
<comment type="cofactor">
    <cofactor evidence="1">
        <name>Co(2+)</name>
        <dbReference type="ChEBI" id="CHEBI:48828"/>
    </cofactor>
    <cofactor evidence="1">
        <name>Zn(2+)</name>
        <dbReference type="ChEBI" id="CHEBI:29105"/>
    </cofactor>
    <text evidence="1">Binds 1 divalent metal cation per subunit. Can use either Co(2+) or Zn(2+).</text>
</comment>
<comment type="cofactor">
    <cofactor evidence="1">
        <name>NAD(+)</name>
        <dbReference type="ChEBI" id="CHEBI:57540"/>
    </cofactor>
</comment>
<comment type="pathway">
    <text evidence="1">Metabolic intermediate biosynthesis; chorismate biosynthesis; chorismate from D-erythrose 4-phosphate and phosphoenolpyruvate: step 2/7.</text>
</comment>
<comment type="subcellular location">
    <subcellularLocation>
        <location evidence="1">Cytoplasm</location>
    </subcellularLocation>
</comment>
<comment type="similarity">
    <text evidence="1">Belongs to the sugar phosphate cyclases superfamily. Dehydroquinate synthase family.</text>
</comment>
<gene>
    <name evidence="1" type="primary">aroB</name>
    <name type="ordered locus">PputW619_0388</name>
</gene>